<dbReference type="EMBL" id="AAEY01000003">
    <property type="protein sequence ID" value="EAL23128.1"/>
    <property type="molecule type" value="Genomic_DNA"/>
</dbReference>
<dbReference type="RefSeq" id="XP_777775.1">
    <property type="nucleotide sequence ID" value="XM_772682.1"/>
</dbReference>
<dbReference type="SMR" id="P0CM91"/>
<dbReference type="EnsemblFungi" id="AAW41113">
    <property type="protein sequence ID" value="AAW41113"/>
    <property type="gene ID" value="CNA04920"/>
</dbReference>
<dbReference type="GeneID" id="4933735"/>
<dbReference type="KEGG" id="cnb:CNBA4730"/>
<dbReference type="VEuPathDB" id="FungiDB:CNBA4730"/>
<dbReference type="HOGENOM" id="CLU_035254_3_0_1"/>
<dbReference type="OrthoDB" id="8643at5206"/>
<dbReference type="GO" id="GO:0016282">
    <property type="term" value="C:eukaryotic 43S preinitiation complex"/>
    <property type="evidence" value="ECO:0007669"/>
    <property type="project" value="UniProtKB-UniRule"/>
</dbReference>
<dbReference type="GO" id="GO:0033290">
    <property type="term" value="C:eukaryotic 48S preinitiation complex"/>
    <property type="evidence" value="ECO:0007669"/>
    <property type="project" value="UniProtKB-UniRule"/>
</dbReference>
<dbReference type="GO" id="GO:0071541">
    <property type="term" value="C:eukaryotic translation initiation factor 3 complex, eIF3m"/>
    <property type="evidence" value="ECO:0007669"/>
    <property type="project" value="UniProtKB-UniRule"/>
</dbReference>
<dbReference type="GO" id="GO:0003743">
    <property type="term" value="F:translation initiation factor activity"/>
    <property type="evidence" value="ECO:0007669"/>
    <property type="project" value="UniProtKB-UniRule"/>
</dbReference>
<dbReference type="GO" id="GO:0001732">
    <property type="term" value="P:formation of cytoplasmic translation initiation complex"/>
    <property type="evidence" value="ECO:0007669"/>
    <property type="project" value="UniProtKB-UniRule"/>
</dbReference>
<dbReference type="HAMAP" id="MF_03012">
    <property type="entry name" value="eIF3m"/>
    <property type="match status" value="1"/>
</dbReference>
<dbReference type="InterPro" id="IPR045237">
    <property type="entry name" value="COPS7/eIF3m"/>
</dbReference>
<dbReference type="InterPro" id="IPR027528">
    <property type="entry name" value="eIF3m"/>
</dbReference>
<dbReference type="InterPro" id="IPR040750">
    <property type="entry name" value="eIF3m_C_helix"/>
</dbReference>
<dbReference type="InterPro" id="IPR000717">
    <property type="entry name" value="PCI_dom"/>
</dbReference>
<dbReference type="PANTHER" id="PTHR15350">
    <property type="entry name" value="COP9 SIGNALOSOME COMPLEX SUBUNIT 7/DENDRITIC CELL PROTEIN GA17"/>
    <property type="match status" value="1"/>
</dbReference>
<dbReference type="PANTHER" id="PTHR15350:SF2">
    <property type="entry name" value="EUKARYOTIC TRANSLATION INITIATION FACTOR 3 SUBUNIT M"/>
    <property type="match status" value="1"/>
</dbReference>
<dbReference type="Pfam" id="PF18005">
    <property type="entry name" value="eIF3m_C_helix"/>
    <property type="match status" value="1"/>
</dbReference>
<dbReference type="Pfam" id="PF01399">
    <property type="entry name" value="PCI"/>
    <property type="match status" value="1"/>
</dbReference>
<dbReference type="SMART" id="SM00088">
    <property type="entry name" value="PINT"/>
    <property type="match status" value="1"/>
</dbReference>
<dbReference type="PROSITE" id="PS50250">
    <property type="entry name" value="PCI"/>
    <property type="match status" value="1"/>
</dbReference>
<organism>
    <name type="scientific">Cryptococcus neoformans var. neoformans serotype D (strain B-3501A)</name>
    <name type="common">Filobasidiella neoformans</name>
    <dbReference type="NCBI Taxonomy" id="283643"/>
    <lineage>
        <taxon>Eukaryota</taxon>
        <taxon>Fungi</taxon>
        <taxon>Dikarya</taxon>
        <taxon>Basidiomycota</taxon>
        <taxon>Agaricomycotina</taxon>
        <taxon>Tremellomycetes</taxon>
        <taxon>Tremellales</taxon>
        <taxon>Cryptococcaceae</taxon>
        <taxon>Cryptococcus</taxon>
        <taxon>Cryptococcus neoformans species complex</taxon>
    </lineage>
</organism>
<reference key="1">
    <citation type="journal article" date="2005" name="Science">
        <title>The genome of the basidiomycetous yeast and human pathogen Cryptococcus neoformans.</title>
        <authorList>
            <person name="Loftus B.J."/>
            <person name="Fung E."/>
            <person name="Roncaglia P."/>
            <person name="Rowley D."/>
            <person name="Amedeo P."/>
            <person name="Bruno D."/>
            <person name="Vamathevan J."/>
            <person name="Miranda M."/>
            <person name="Anderson I.J."/>
            <person name="Fraser J.A."/>
            <person name="Allen J.E."/>
            <person name="Bosdet I.E."/>
            <person name="Brent M.R."/>
            <person name="Chiu R."/>
            <person name="Doering T.L."/>
            <person name="Donlin M.J."/>
            <person name="D'Souza C.A."/>
            <person name="Fox D.S."/>
            <person name="Grinberg V."/>
            <person name="Fu J."/>
            <person name="Fukushima M."/>
            <person name="Haas B.J."/>
            <person name="Huang J.C."/>
            <person name="Janbon G."/>
            <person name="Jones S.J.M."/>
            <person name="Koo H.L."/>
            <person name="Krzywinski M.I."/>
            <person name="Kwon-Chung K.J."/>
            <person name="Lengeler K.B."/>
            <person name="Maiti R."/>
            <person name="Marra M.A."/>
            <person name="Marra R.E."/>
            <person name="Mathewson C.A."/>
            <person name="Mitchell T.G."/>
            <person name="Pertea M."/>
            <person name="Riggs F.R."/>
            <person name="Salzberg S.L."/>
            <person name="Schein J.E."/>
            <person name="Shvartsbeyn A."/>
            <person name="Shin H."/>
            <person name="Shumway M."/>
            <person name="Specht C.A."/>
            <person name="Suh B.B."/>
            <person name="Tenney A."/>
            <person name="Utterback T.R."/>
            <person name="Wickes B.L."/>
            <person name="Wortman J.R."/>
            <person name="Wye N.H."/>
            <person name="Kronstad J.W."/>
            <person name="Lodge J.K."/>
            <person name="Heitman J."/>
            <person name="Davis R.W."/>
            <person name="Fraser C.M."/>
            <person name="Hyman R.W."/>
        </authorList>
    </citation>
    <scope>NUCLEOTIDE SEQUENCE [LARGE SCALE GENOMIC DNA]</scope>
    <source>
        <strain>B-3501A</strain>
    </source>
</reference>
<proteinExistence type="inferred from homology"/>
<keyword id="KW-0963">Cytoplasm</keyword>
<keyword id="KW-0396">Initiation factor</keyword>
<keyword id="KW-0648">Protein biosynthesis</keyword>
<evidence type="ECO:0000255" key="1">
    <source>
        <dbReference type="HAMAP-Rule" id="MF_03012"/>
    </source>
</evidence>
<evidence type="ECO:0000255" key="2">
    <source>
        <dbReference type="PROSITE-ProRule" id="PRU01185"/>
    </source>
</evidence>
<evidence type="ECO:0000256" key="3">
    <source>
        <dbReference type="SAM" id="MobiDB-lite"/>
    </source>
</evidence>
<protein>
    <recommendedName>
        <fullName evidence="1">Eukaryotic translation initiation factor 3 subunit M</fullName>
        <shortName evidence="1">eIF3m</shortName>
    </recommendedName>
</protein>
<feature type="chain" id="PRO_0000410048" description="Eukaryotic translation initiation factor 3 subunit M">
    <location>
        <begin position="1"/>
        <end position="443"/>
    </location>
</feature>
<feature type="domain" description="PCI" evidence="2">
    <location>
        <begin position="205"/>
        <end position="375"/>
    </location>
</feature>
<feature type="region of interest" description="Disordered" evidence="3">
    <location>
        <begin position="413"/>
        <end position="443"/>
    </location>
</feature>
<feature type="compositionally biased region" description="Basic and acidic residues" evidence="3">
    <location>
        <begin position="429"/>
        <end position="443"/>
    </location>
</feature>
<accession>P0CM91</accession>
<accession>Q55ZL7</accession>
<accession>Q5KNY0</accession>
<name>EIF3M_CRYNB</name>
<gene>
    <name type="ordered locus">CNBA4730</name>
</gene>
<comment type="function">
    <text evidence="1">Component of the eukaryotic translation initiation factor 3 (eIF-3) complex, which is involved in protein synthesis of a specialized repertoire of mRNAs and, together with other initiation factors, stimulates binding of mRNA and methionyl-tRNAi to the 40S ribosome. The eIF-3 complex specifically targets and initiates translation of a subset of mRNAs involved in cell proliferation.</text>
</comment>
<comment type="subunit">
    <text evidence="1">Component of the eukaryotic translation initiation factor 3 (eIF-3) complex.</text>
</comment>
<comment type="subcellular location">
    <subcellularLocation>
        <location evidence="1">Cytoplasm</location>
    </subcellularLocation>
</comment>
<comment type="similarity">
    <text evidence="1">Belongs to the eIF-3 subunit M family.</text>
</comment>
<sequence>MADCITIAPELSFKDQITELAAHLSRSLPNADNQVAVKEFVQGYEAQVDTEEGRGDVEDAKKKQVVKSIVDKFVELKGGLEAAKESEVESSHFLLQHVLSTTFDQASEEYAQAVKDVNEAVKKGAQETTKITRAEAASRVLKNTYNFLPSNSPIRPSTLLSLMSLLASTLDLSALPLPTSTLLPALSSWSIPSSEKVSFLTTASGLYQSTGNLAKALELLTLALKESVEPTVVERAVLLALAVPNKFELDDVLAVQGVKEQLGKVQGVVELFEGDEVEAIEKGKKWTAENVSLIEGAGIPGFTSETVLRKLRLIALVALCTKSETRQLEYAPIAKALAIEESEVETWVIDAVRSKLIVARISQPQSLIRIHSISSITASSRRFGPSEWQLLEKRLEQWKKSVNEARQVVEEAETVAQQGLGQQRRGGKRREEKKEKEDKEEQE</sequence>